<gene>
    <name evidence="1" type="primary">leuC</name>
    <name type="ordered locus">PSHAa2892</name>
</gene>
<keyword id="KW-0004">4Fe-4S</keyword>
<keyword id="KW-0028">Amino-acid biosynthesis</keyword>
<keyword id="KW-0100">Branched-chain amino acid biosynthesis</keyword>
<keyword id="KW-0408">Iron</keyword>
<keyword id="KW-0411">Iron-sulfur</keyword>
<keyword id="KW-0432">Leucine biosynthesis</keyword>
<keyword id="KW-0456">Lyase</keyword>
<keyword id="KW-0479">Metal-binding</keyword>
<keyword id="KW-1185">Reference proteome</keyword>
<sequence length="466" mass="49990">MAQTLYDKIWQAHTIASINEQTDLLYIDRHLVHEVTSPQAFAGLREKNRTVRCPEKTFATMDHNVSTKSRSLDAASEVSKNQLMALDANCKEFGIVLYDLNSINQGIVHVMGPEQGITLPGTTIVCGDSHTSTHGAFGALAHGIGTSEVEHVLATQTLQQKKAKSLKIQINGRLRPTVTAKDLIMAVIGKLGTAGGTGYVAEFCGEGIEALSMEARMTLCNMSIEMGAKAGLIASDQITYDYLKGRPFAPKGADFDAAVKYWETLKTDDGAQFDHVVELEASSIQPQITWGTSPEQVIGVDECIPDPDKEPDLIKADAIRSALKYMGLKAGEKLSSAKVDTVFIGSCTNSRIEDLRAAAKIVEGKKVVAGIEALIVPGSGLVKKQAEDEGLADIFKAAGFEWREPGCSMCLAMNDDRLGAGKRCASTSNRNFEGRQGRGGRTHLVSPAMAAAAAIHGHFVDIRGEA</sequence>
<reference key="1">
    <citation type="journal article" date="2005" name="Genome Res.">
        <title>Coping with cold: the genome of the versatile marine Antarctica bacterium Pseudoalteromonas haloplanktis TAC125.</title>
        <authorList>
            <person name="Medigue C."/>
            <person name="Krin E."/>
            <person name="Pascal G."/>
            <person name="Barbe V."/>
            <person name="Bernsel A."/>
            <person name="Bertin P.N."/>
            <person name="Cheung F."/>
            <person name="Cruveiller S."/>
            <person name="D'Amico S."/>
            <person name="Duilio A."/>
            <person name="Fang G."/>
            <person name="Feller G."/>
            <person name="Ho C."/>
            <person name="Mangenot S."/>
            <person name="Marino G."/>
            <person name="Nilsson J."/>
            <person name="Parrilli E."/>
            <person name="Rocha E.P.C."/>
            <person name="Rouy Z."/>
            <person name="Sekowska A."/>
            <person name="Tutino M.L."/>
            <person name="Vallenet D."/>
            <person name="von Heijne G."/>
            <person name="Danchin A."/>
        </authorList>
    </citation>
    <scope>NUCLEOTIDE SEQUENCE [LARGE SCALE GENOMIC DNA]</scope>
    <source>
        <strain>TAC 125</strain>
    </source>
</reference>
<evidence type="ECO:0000255" key="1">
    <source>
        <dbReference type="HAMAP-Rule" id="MF_01026"/>
    </source>
</evidence>
<proteinExistence type="inferred from homology"/>
<comment type="function">
    <text evidence="1">Catalyzes the isomerization between 2-isopropylmalate and 3-isopropylmalate, via the formation of 2-isopropylmaleate.</text>
</comment>
<comment type="catalytic activity">
    <reaction evidence="1">
        <text>(2R,3S)-3-isopropylmalate = (2S)-2-isopropylmalate</text>
        <dbReference type="Rhea" id="RHEA:32287"/>
        <dbReference type="ChEBI" id="CHEBI:1178"/>
        <dbReference type="ChEBI" id="CHEBI:35121"/>
        <dbReference type="EC" id="4.2.1.33"/>
    </reaction>
</comment>
<comment type="cofactor">
    <cofactor evidence="1">
        <name>[4Fe-4S] cluster</name>
        <dbReference type="ChEBI" id="CHEBI:49883"/>
    </cofactor>
    <text evidence="1">Binds 1 [4Fe-4S] cluster per subunit.</text>
</comment>
<comment type="pathway">
    <text evidence="1">Amino-acid biosynthesis; L-leucine biosynthesis; L-leucine from 3-methyl-2-oxobutanoate: step 2/4.</text>
</comment>
<comment type="subunit">
    <text evidence="1">Heterodimer of LeuC and LeuD.</text>
</comment>
<comment type="similarity">
    <text evidence="1">Belongs to the aconitase/IPM isomerase family. LeuC type 1 subfamily.</text>
</comment>
<organism>
    <name type="scientific">Pseudoalteromonas translucida (strain TAC 125)</name>
    <dbReference type="NCBI Taxonomy" id="326442"/>
    <lineage>
        <taxon>Bacteria</taxon>
        <taxon>Pseudomonadati</taxon>
        <taxon>Pseudomonadota</taxon>
        <taxon>Gammaproteobacteria</taxon>
        <taxon>Alteromonadales</taxon>
        <taxon>Pseudoalteromonadaceae</taxon>
        <taxon>Pseudoalteromonas</taxon>
    </lineage>
</organism>
<name>LEUC_PSET1</name>
<feature type="chain" id="PRO_0000076783" description="3-isopropylmalate dehydratase large subunit">
    <location>
        <begin position="1"/>
        <end position="466"/>
    </location>
</feature>
<feature type="binding site" evidence="1">
    <location>
        <position position="347"/>
    </location>
    <ligand>
        <name>[4Fe-4S] cluster</name>
        <dbReference type="ChEBI" id="CHEBI:49883"/>
    </ligand>
</feature>
<feature type="binding site" evidence="1">
    <location>
        <position position="407"/>
    </location>
    <ligand>
        <name>[4Fe-4S] cluster</name>
        <dbReference type="ChEBI" id="CHEBI:49883"/>
    </ligand>
</feature>
<feature type="binding site" evidence="1">
    <location>
        <position position="410"/>
    </location>
    <ligand>
        <name>[4Fe-4S] cluster</name>
        <dbReference type="ChEBI" id="CHEBI:49883"/>
    </ligand>
</feature>
<accession>Q3IJS4</accession>
<protein>
    <recommendedName>
        <fullName evidence="1">3-isopropylmalate dehydratase large subunit</fullName>
        <ecNumber evidence="1">4.2.1.33</ecNumber>
    </recommendedName>
    <alternativeName>
        <fullName evidence="1">Alpha-IPM isomerase</fullName>
        <shortName evidence="1">IPMI</shortName>
    </alternativeName>
    <alternativeName>
        <fullName evidence="1">Isopropylmalate isomerase</fullName>
    </alternativeName>
</protein>
<dbReference type="EC" id="4.2.1.33" evidence="1"/>
<dbReference type="EMBL" id="CR954246">
    <property type="protein sequence ID" value="CAI87928.1"/>
    <property type="molecule type" value="Genomic_DNA"/>
</dbReference>
<dbReference type="SMR" id="Q3IJS4"/>
<dbReference type="STRING" id="326442.PSHAa2892"/>
<dbReference type="KEGG" id="pha:PSHAa2892"/>
<dbReference type="PATRIC" id="fig|326442.8.peg.2792"/>
<dbReference type="eggNOG" id="COG0065">
    <property type="taxonomic scope" value="Bacteria"/>
</dbReference>
<dbReference type="HOGENOM" id="CLU_006714_3_4_6"/>
<dbReference type="BioCyc" id="PHAL326442:PSHA_RS14195-MONOMER"/>
<dbReference type="UniPathway" id="UPA00048">
    <property type="reaction ID" value="UER00071"/>
</dbReference>
<dbReference type="Proteomes" id="UP000006843">
    <property type="component" value="Chromosome I"/>
</dbReference>
<dbReference type="GO" id="GO:0003861">
    <property type="term" value="F:3-isopropylmalate dehydratase activity"/>
    <property type="evidence" value="ECO:0007669"/>
    <property type="project" value="UniProtKB-UniRule"/>
</dbReference>
<dbReference type="GO" id="GO:0051539">
    <property type="term" value="F:4 iron, 4 sulfur cluster binding"/>
    <property type="evidence" value="ECO:0007669"/>
    <property type="project" value="UniProtKB-KW"/>
</dbReference>
<dbReference type="GO" id="GO:0046872">
    <property type="term" value="F:metal ion binding"/>
    <property type="evidence" value="ECO:0007669"/>
    <property type="project" value="UniProtKB-KW"/>
</dbReference>
<dbReference type="GO" id="GO:0009098">
    <property type="term" value="P:L-leucine biosynthetic process"/>
    <property type="evidence" value="ECO:0007669"/>
    <property type="project" value="UniProtKB-UniRule"/>
</dbReference>
<dbReference type="CDD" id="cd01583">
    <property type="entry name" value="IPMI"/>
    <property type="match status" value="1"/>
</dbReference>
<dbReference type="FunFam" id="3.30.499.10:FF:000006">
    <property type="entry name" value="3-isopropylmalate dehydratase large subunit"/>
    <property type="match status" value="1"/>
</dbReference>
<dbReference type="FunFam" id="3.30.499.10:FF:000007">
    <property type="entry name" value="3-isopropylmalate dehydratase large subunit"/>
    <property type="match status" value="1"/>
</dbReference>
<dbReference type="Gene3D" id="3.30.499.10">
    <property type="entry name" value="Aconitase, domain 3"/>
    <property type="match status" value="2"/>
</dbReference>
<dbReference type="HAMAP" id="MF_01026">
    <property type="entry name" value="LeuC_type1"/>
    <property type="match status" value="1"/>
</dbReference>
<dbReference type="InterPro" id="IPR004430">
    <property type="entry name" value="3-IsopropMal_deHydase_lsu"/>
</dbReference>
<dbReference type="InterPro" id="IPR015931">
    <property type="entry name" value="Acnase/IPM_dHydase_lsu_aba_1/3"/>
</dbReference>
<dbReference type="InterPro" id="IPR001030">
    <property type="entry name" value="Acoase/IPM_deHydtase_lsu_aba"/>
</dbReference>
<dbReference type="InterPro" id="IPR018136">
    <property type="entry name" value="Aconitase_4Fe-4S_BS"/>
</dbReference>
<dbReference type="InterPro" id="IPR036008">
    <property type="entry name" value="Aconitase_4Fe-4S_dom"/>
</dbReference>
<dbReference type="InterPro" id="IPR050067">
    <property type="entry name" value="IPM_dehydratase_rel_enz"/>
</dbReference>
<dbReference type="InterPro" id="IPR033941">
    <property type="entry name" value="IPMI_cat"/>
</dbReference>
<dbReference type="NCBIfam" id="TIGR00170">
    <property type="entry name" value="leuC"/>
    <property type="match status" value="1"/>
</dbReference>
<dbReference type="NCBIfam" id="NF004016">
    <property type="entry name" value="PRK05478.1"/>
    <property type="match status" value="1"/>
</dbReference>
<dbReference type="NCBIfam" id="NF009116">
    <property type="entry name" value="PRK12466.1"/>
    <property type="match status" value="1"/>
</dbReference>
<dbReference type="PANTHER" id="PTHR43822:SF9">
    <property type="entry name" value="3-ISOPROPYLMALATE DEHYDRATASE"/>
    <property type="match status" value="1"/>
</dbReference>
<dbReference type="PANTHER" id="PTHR43822">
    <property type="entry name" value="HOMOACONITASE, MITOCHONDRIAL-RELATED"/>
    <property type="match status" value="1"/>
</dbReference>
<dbReference type="Pfam" id="PF00330">
    <property type="entry name" value="Aconitase"/>
    <property type="match status" value="1"/>
</dbReference>
<dbReference type="PRINTS" id="PR00415">
    <property type="entry name" value="ACONITASE"/>
</dbReference>
<dbReference type="SUPFAM" id="SSF53732">
    <property type="entry name" value="Aconitase iron-sulfur domain"/>
    <property type="match status" value="1"/>
</dbReference>
<dbReference type="PROSITE" id="PS00450">
    <property type="entry name" value="ACONITASE_1"/>
    <property type="match status" value="1"/>
</dbReference>
<dbReference type="PROSITE" id="PS01244">
    <property type="entry name" value="ACONITASE_2"/>
    <property type="match status" value="1"/>
</dbReference>